<protein>
    <recommendedName>
        <fullName>Uncharacterized protein BLLF2</fullName>
    </recommendedName>
</protein>
<feature type="chain" id="PRO_0000408276" description="Uncharacterized protein BLLF2">
    <location>
        <begin position="1"/>
        <end position="148"/>
    </location>
</feature>
<feature type="region of interest" description="Disordered" evidence="1">
    <location>
        <begin position="1"/>
        <end position="86"/>
    </location>
</feature>
<feature type="region of interest" description="Disordered" evidence="1">
    <location>
        <begin position="122"/>
        <end position="148"/>
    </location>
</feature>
<feature type="compositionally biased region" description="Low complexity" evidence="1">
    <location>
        <begin position="1"/>
        <end position="17"/>
    </location>
</feature>
<feature type="compositionally biased region" description="Basic residues" evidence="1">
    <location>
        <begin position="38"/>
        <end position="57"/>
    </location>
</feature>
<feature type="compositionally biased region" description="Polar residues" evidence="1">
    <location>
        <begin position="134"/>
        <end position="148"/>
    </location>
</feature>
<sequence length="148" mass="16684">MCPPVRQRPAQAPPAKRQALETVPHPQNRGRLMSPKARPPKMQRRPRPPVAKRRRFPRSPQQVERPILPPVESTPQDMEPGQVQSPPQITAVIQLRQERDTMRPPIYLPALLANCGPAGLLRAHRLPQPKPPCQSRQRPSPDSQTSPC</sequence>
<dbReference type="EMBL" id="AY961628">
    <property type="protein sequence ID" value="AAY41117.1"/>
    <property type="molecule type" value="Genomic_DNA"/>
</dbReference>
<dbReference type="Proteomes" id="UP000007641">
    <property type="component" value="Genome"/>
</dbReference>
<dbReference type="InterPro" id="IPR035221">
    <property type="entry name" value="DUF5451"/>
</dbReference>
<dbReference type="Pfam" id="PF17532">
    <property type="entry name" value="DUF5451"/>
    <property type="match status" value="1"/>
</dbReference>
<keyword id="KW-0244">Early protein</keyword>
<gene>
    <name type="ORF">BLLF2</name>
</gene>
<organismHost>
    <name type="scientific">Homo sapiens</name>
    <name type="common">Human</name>
    <dbReference type="NCBI Taxonomy" id="9606"/>
</organismHost>
<reference key="1">
    <citation type="journal article" date="2005" name="J. Virol.">
        <title>Genomic sequence analysis of Epstein-Barr virus strain GD1 from a nasopharyngeal carcinoma patient.</title>
        <authorList>
            <person name="Zeng M.-S."/>
            <person name="Li D.-J."/>
            <person name="Liu Q.-L."/>
            <person name="Song L.-B."/>
            <person name="Li M.-Z."/>
            <person name="Zhang R.-H."/>
            <person name="Yu X.-J."/>
            <person name="Wang H.-M."/>
            <person name="Ernberg I."/>
            <person name="Zeng Y.-X."/>
        </authorList>
    </citation>
    <scope>NUCLEOTIDE SEQUENCE [LARGE SCALE GENOMIC DNA]</scope>
</reference>
<organism>
    <name type="scientific">Epstein-Barr virus (strain GD1)</name>
    <name type="common">HHV-4</name>
    <name type="synonym">Human gammaherpesvirus 4</name>
    <dbReference type="NCBI Taxonomy" id="10376"/>
    <lineage>
        <taxon>Viruses</taxon>
        <taxon>Duplodnaviria</taxon>
        <taxon>Heunggongvirae</taxon>
        <taxon>Peploviricota</taxon>
        <taxon>Herviviricetes</taxon>
        <taxon>Herpesvirales</taxon>
        <taxon>Orthoherpesviridae</taxon>
        <taxon>Gammaherpesvirinae</taxon>
        <taxon>Lymphocryptovirus</taxon>
        <taxon>Lymphocryptovirus humangamma4</taxon>
    </lineage>
</organism>
<proteinExistence type="inferred from homology"/>
<evidence type="ECO:0000256" key="1">
    <source>
        <dbReference type="SAM" id="MobiDB-lite"/>
    </source>
</evidence>
<evidence type="ECO:0000305" key="2"/>
<comment type="similarity">
    <text evidence="2">Belongs to the Epstein-Barr virus BLLF2 family.</text>
</comment>
<name>BLLF2_EBVG</name>
<accession>Q3KST3</accession>